<name>SYFB_UREPA</name>
<feature type="chain" id="PRO_0000126980" description="Phenylalanine--tRNA ligase beta subunit">
    <location>
        <begin position="1"/>
        <end position="772"/>
    </location>
</feature>
<feature type="domain" description="tRNA-binding">
    <location>
        <begin position="40"/>
        <end position="158"/>
    </location>
</feature>
<feature type="domain" description="B5">
    <location>
        <begin position="397"/>
        <end position="468"/>
    </location>
</feature>
<feature type="domain" description="FDX-ACB">
    <location>
        <begin position="691"/>
        <end position="772"/>
    </location>
</feature>
<feature type="binding site" evidence="1">
    <location>
        <position position="446"/>
    </location>
    <ligand>
        <name>Mg(2+)</name>
        <dbReference type="ChEBI" id="CHEBI:18420"/>
        <note>shared with alpha subunit</note>
    </ligand>
</feature>
<feature type="binding site" evidence="1">
    <location>
        <position position="452"/>
    </location>
    <ligand>
        <name>Mg(2+)</name>
        <dbReference type="ChEBI" id="CHEBI:18420"/>
        <note>shared with alpha subunit</note>
    </ligand>
</feature>
<feature type="binding site" evidence="1">
    <location>
        <position position="455"/>
    </location>
    <ligand>
        <name>Mg(2+)</name>
        <dbReference type="ChEBI" id="CHEBI:18420"/>
        <note>shared with alpha subunit</note>
    </ligand>
</feature>
<feature type="binding site" evidence="1">
    <location>
        <position position="456"/>
    </location>
    <ligand>
        <name>Mg(2+)</name>
        <dbReference type="ChEBI" id="CHEBI:18420"/>
        <note>shared with alpha subunit</note>
    </ligand>
</feature>
<accession>Q9PQ33</accession>
<gene>
    <name type="primary">pheT</name>
    <name type="ordered locus">UU457</name>
</gene>
<keyword id="KW-0030">Aminoacyl-tRNA synthetase</keyword>
<keyword id="KW-0067">ATP-binding</keyword>
<keyword id="KW-0963">Cytoplasm</keyword>
<keyword id="KW-0436">Ligase</keyword>
<keyword id="KW-0460">Magnesium</keyword>
<keyword id="KW-0479">Metal-binding</keyword>
<keyword id="KW-0547">Nucleotide-binding</keyword>
<keyword id="KW-0648">Protein biosynthesis</keyword>
<keyword id="KW-1185">Reference proteome</keyword>
<keyword id="KW-0694">RNA-binding</keyword>
<keyword id="KW-0820">tRNA-binding</keyword>
<evidence type="ECO:0000250" key="1"/>
<evidence type="ECO:0000305" key="2"/>
<organism>
    <name type="scientific">Ureaplasma parvum serovar 3 (strain ATCC 700970)</name>
    <dbReference type="NCBI Taxonomy" id="273119"/>
    <lineage>
        <taxon>Bacteria</taxon>
        <taxon>Bacillati</taxon>
        <taxon>Mycoplasmatota</taxon>
        <taxon>Mycoplasmoidales</taxon>
        <taxon>Mycoplasmoidaceae</taxon>
        <taxon>Ureaplasma</taxon>
    </lineage>
</organism>
<sequence>MILSLNLLHKISPKLKKIPLNELCAALMDLGCEVETINSIKPSTNLVFAKVLEKTRHPNANHLNLVKVKANQKVYEIVCGANNFSVHNWVVLAKLNAELANGLKITPRELRGYVSNGMLCAYSEINPQATSFLTSTDLDGILVLDDNYDHYKTPNQIFNLDDVILDLSIPSNRNDLNGYFWIAKELCAYFDFEYVVDATINHRPHKEIIDVRILSDDVNSYGIIEVKNIQNYILKWNTKSILINNQIKVLNNFADNMNFLTLLTANPLHAFDARKISGQIVVKNAEEDAILLGLDQKEYLIKKGDLIIVDDQKILALAGIIGSNDSKIDATSTTAYIECANFNPMLIANTARRLKINTAAAMRFSKPLTNYVTKVTLKKLLANFKSDAKLIYYFKHSVHNVIKNKINQVSDFVGAEIDLDTAQTFLKRLGYKINKSNLITPSHRYDVLNEFDVYEDIMKKISIQEIKPQPISFDILNFENNLAYDFEKKVSDFLVDQGLFECKTYNLKNQTQAHEFNFFNFKQAYEINNPTSNMRSHLKLNNLNSLLEVLEYNQNQKNELENIFEISKINPVDSSQQTVLSIILCKPLINSKINDSLIVNNFVTTKALLHALLTKLNIDYAYDKNHVVNELYDNNQLALINANKQVFGFIGQLKNQVKKTYGLSNDIFIINLNLTSYLNQKQVITKVIKPSMYHDVIRDISVKLASDVDLNNIIANIKKIKNIRKVEISDLYIKDDGIIYTFKYYINDHLSNLSSEQIIIIEQEVNNYLKQF</sequence>
<protein>
    <recommendedName>
        <fullName>Phenylalanine--tRNA ligase beta subunit</fullName>
        <ecNumber>6.1.1.20</ecNumber>
    </recommendedName>
    <alternativeName>
        <fullName>Phenylalanyl-tRNA synthetase beta subunit</fullName>
        <shortName>PheRS</shortName>
    </alternativeName>
</protein>
<dbReference type="EC" id="6.1.1.20"/>
<dbReference type="EMBL" id="AF222894">
    <property type="protein sequence ID" value="AAF30869.1"/>
    <property type="molecule type" value="Genomic_DNA"/>
</dbReference>
<dbReference type="RefSeq" id="WP_010891780.1">
    <property type="nucleotide sequence ID" value="NC_002162.1"/>
</dbReference>
<dbReference type="SMR" id="Q9PQ33"/>
<dbReference type="STRING" id="273119.UU457"/>
<dbReference type="EnsemblBacteria" id="AAF30869">
    <property type="protein sequence ID" value="AAF30869"/>
    <property type="gene ID" value="UU457"/>
</dbReference>
<dbReference type="GeneID" id="29672674"/>
<dbReference type="KEGG" id="uur:UU457"/>
<dbReference type="PATRIC" id="fig|273119.6.peg.473"/>
<dbReference type="eggNOG" id="COG0072">
    <property type="taxonomic scope" value="Bacteria"/>
</dbReference>
<dbReference type="eggNOG" id="COG0073">
    <property type="taxonomic scope" value="Bacteria"/>
</dbReference>
<dbReference type="HOGENOM" id="CLU_016891_2_0_14"/>
<dbReference type="OrthoDB" id="9805455at2"/>
<dbReference type="Proteomes" id="UP000000423">
    <property type="component" value="Chromosome"/>
</dbReference>
<dbReference type="GO" id="GO:0009328">
    <property type="term" value="C:phenylalanine-tRNA ligase complex"/>
    <property type="evidence" value="ECO:0007669"/>
    <property type="project" value="TreeGrafter"/>
</dbReference>
<dbReference type="GO" id="GO:0005524">
    <property type="term" value="F:ATP binding"/>
    <property type="evidence" value="ECO:0007669"/>
    <property type="project" value="UniProtKB-UniRule"/>
</dbReference>
<dbReference type="GO" id="GO:0000287">
    <property type="term" value="F:magnesium ion binding"/>
    <property type="evidence" value="ECO:0007669"/>
    <property type="project" value="UniProtKB-UniRule"/>
</dbReference>
<dbReference type="GO" id="GO:0004826">
    <property type="term" value="F:phenylalanine-tRNA ligase activity"/>
    <property type="evidence" value="ECO:0007669"/>
    <property type="project" value="UniProtKB-UniRule"/>
</dbReference>
<dbReference type="GO" id="GO:0000049">
    <property type="term" value="F:tRNA binding"/>
    <property type="evidence" value="ECO:0007669"/>
    <property type="project" value="UniProtKB-KW"/>
</dbReference>
<dbReference type="GO" id="GO:0006432">
    <property type="term" value="P:phenylalanyl-tRNA aminoacylation"/>
    <property type="evidence" value="ECO:0007669"/>
    <property type="project" value="UniProtKB-UniRule"/>
</dbReference>
<dbReference type="CDD" id="cd02796">
    <property type="entry name" value="tRNA_bind_bactPheRS"/>
    <property type="match status" value="1"/>
</dbReference>
<dbReference type="Gene3D" id="3.30.56.10">
    <property type="match status" value="2"/>
</dbReference>
<dbReference type="Gene3D" id="3.30.930.10">
    <property type="entry name" value="Bira Bifunctional Protein, Domain 2"/>
    <property type="match status" value="1"/>
</dbReference>
<dbReference type="Gene3D" id="2.40.50.140">
    <property type="entry name" value="Nucleic acid-binding proteins"/>
    <property type="match status" value="1"/>
</dbReference>
<dbReference type="Gene3D" id="3.50.40.10">
    <property type="entry name" value="Phenylalanyl-trna Synthetase, Chain B, domain 3"/>
    <property type="match status" value="1"/>
</dbReference>
<dbReference type="HAMAP" id="MF_00283">
    <property type="entry name" value="Phe_tRNA_synth_beta1"/>
    <property type="match status" value="1"/>
</dbReference>
<dbReference type="InterPro" id="IPR045864">
    <property type="entry name" value="aa-tRNA-synth_II/BPL/LPL"/>
</dbReference>
<dbReference type="InterPro" id="IPR005146">
    <property type="entry name" value="B3/B4_tRNA-bd"/>
</dbReference>
<dbReference type="InterPro" id="IPR009061">
    <property type="entry name" value="DNA-bd_dom_put_sf"/>
</dbReference>
<dbReference type="InterPro" id="IPR005121">
    <property type="entry name" value="Fdx_antiC-bd"/>
</dbReference>
<dbReference type="InterPro" id="IPR012340">
    <property type="entry name" value="NA-bd_OB-fold"/>
</dbReference>
<dbReference type="InterPro" id="IPR045060">
    <property type="entry name" value="Phe-tRNA-ligase_IIc_bsu"/>
</dbReference>
<dbReference type="InterPro" id="IPR004532">
    <property type="entry name" value="Phe-tRNA-ligase_IIc_bsu_bact"/>
</dbReference>
<dbReference type="InterPro" id="IPR020825">
    <property type="entry name" value="Phe-tRNA_synthase-like_B3/B4"/>
</dbReference>
<dbReference type="InterPro" id="IPR041616">
    <property type="entry name" value="PheRS_beta_core"/>
</dbReference>
<dbReference type="InterPro" id="IPR002547">
    <property type="entry name" value="tRNA-bd_dom"/>
</dbReference>
<dbReference type="InterPro" id="IPR033714">
    <property type="entry name" value="tRNA_bind_bactPheRS"/>
</dbReference>
<dbReference type="InterPro" id="IPR005147">
    <property type="entry name" value="tRNA_synthase_B5-dom"/>
</dbReference>
<dbReference type="NCBIfam" id="TIGR00472">
    <property type="entry name" value="pheT_bact"/>
    <property type="match status" value="1"/>
</dbReference>
<dbReference type="PANTHER" id="PTHR10947:SF0">
    <property type="entry name" value="PHENYLALANINE--TRNA LIGASE BETA SUBUNIT"/>
    <property type="match status" value="1"/>
</dbReference>
<dbReference type="PANTHER" id="PTHR10947">
    <property type="entry name" value="PHENYLALANYL-TRNA SYNTHETASE BETA CHAIN AND LEUCINE-RICH REPEAT-CONTAINING PROTEIN 47"/>
    <property type="match status" value="1"/>
</dbReference>
<dbReference type="Pfam" id="PF03483">
    <property type="entry name" value="B3_4"/>
    <property type="match status" value="1"/>
</dbReference>
<dbReference type="Pfam" id="PF03484">
    <property type="entry name" value="B5"/>
    <property type="match status" value="1"/>
</dbReference>
<dbReference type="Pfam" id="PF01588">
    <property type="entry name" value="tRNA_bind"/>
    <property type="match status" value="1"/>
</dbReference>
<dbReference type="Pfam" id="PF17759">
    <property type="entry name" value="tRNA_synthFbeta"/>
    <property type="match status" value="1"/>
</dbReference>
<dbReference type="SMART" id="SM00873">
    <property type="entry name" value="B3_4"/>
    <property type="match status" value="1"/>
</dbReference>
<dbReference type="SMART" id="SM00874">
    <property type="entry name" value="B5"/>
    <property type="match status" value="1"/>
</dbReference>
<dbReference type="SUPFAM" id="SSF55681">
    <property type="entry name" value="Class II aaRS and biotin synthetases"/>
    <property type="match status" value="1"/>
</dbReference>
<dbReference type="SUPFAM" id="SSF50249">
    <property type="entry name" value="Nucleic acid-binding proteins"/>
    <property type="match status" value="1"/>
</dbReference>
<dbReference type="SUPFAM" id="SSF56037">
    <property type="entry name" value="PheT/TilS domain"/>
    <property type="match status" value="1"/>
</dbReference>
<dbReference type="SUPFAM" id="SSF46955">
    <property type="entry name" value="Putative DNA-binding domain"/>
    <property type="match status" value="1"/>
</dbReference>
<dbReference type="PROSITE" id="PS51483">
    <property type="entry name" value="B5"/>
    <property type="match status" value="1"/>
</dbReference>
<dbReference type="PROSITE" id="PS51447">
    <property type="entry name" value="FDX_ACB"/>
    <property type="match status" value="1"/>
</dbReference>
<dbReference type="PROSITE" id="PS50886">
    <property type="entry name" value="TRBD"/>
    <property type="match status" value="1"/>
</dbReference>
<proteinExistence type="inferred from homology"/>
<reference key="1">
    <citation type="journal article" date="2000" name="Nature">
        <title>The complete sequence of the mucosal pathogen Ureaplasma urealyticum.</title>
        <authorList>
            <person name="Glass J.I."/>
            <person name="Lefkowitz E.J."/>
            <person name="Glass J.S."/>
            <person name="Heiner C.R."/>
            <person name="Chen E.Y."/>
            <person name="Cassell G.H."/>
        </authorList>
    </citation>
    <scope>NUCLEOTIDE SEQUENCE [LARGE SCALE GENOMIC DNA]</scope>
    <source>
        <strain>ATCC 700970</strain>
    </source>
</reference>
<comment type="catalytic activity">
    <reaction>
        <text>tRNA(Phe) + L-phenylalanine + ATP = L-phenylalanyl-tRNA(Phe) + AMP + diphosphate + H(+)</text>
        <dbReference type="Rhea" id="RHEA:19413"/>
        <dbReference type="Rhea" id="RHEA-COMP:9668"/>
        <dbReference type="Rhea" id="RHEA-COMP:9699"/>
        <dbReference type="ChEBI" id="CHEBI:15378"/>
        <dbReference type="ChEBI" id="CHEBI:30616"/>
        <dbReference type="ChEBI" id="CHEBI:33019"/>
        <dbReference type="ChEBI" id="CHEBI:58095"/>
        <dbReference type="ChEBI" id="CHEBI:78442"/>
        <dbReference type="ChEBI" id="CHEBI:78531"/>
        <dbReference type="ChEBI" id="CHEBI:456215"/>
        <dbReference type="EC" id="6.1.1.20"/>
    </reaction>
</comment>
<comment type="cofactor">
    <cofactor evidence="1">
        <name>Mg(2+)</name>
        <dbReference type="ChEBI" id="CHEBI:18420"/>
    </cofactor>
    <text evidence="1">Binds 2 magnesium ions per tetramer.</text>
</comment>
<comment type="subunit">
    <text evidence="1">Tetramer of two alpha and two beta subunits.</text>
</comment>
<comment type="subcellular location">
    <subcellularLocation>
        <location evidence="1">Cytoplasm</location>
    </subcellularLocation>
</comment>
<comment type="similarity">
    <text evidence="2">Belongs to the phenylalanyl-tRNA synthetase beta subunit family. Type 1 subfamily.</text>
</comment>